<reference key="1">
    <citation type="journal article" date="2002" name="Proc. Natl. Acad. Sci. U.S.A.">
        <title>Complete genome sequence of Clostridium perfringens, an anaerobic flesh-eater.</title>
        <authorList>
            <person name="Shimizu T."/>
            <person name="Ohtani K."/>
            <person name="Hirakawa H."/>
            <person name="Ohshima K."/>
            <person name="Yamashita A."/>
            <person name="Shiba T."/>
            <person name="Ogasawara N."/>
            <person name="Hattori M."/>
            <person name="Kuhara S."/>
            <person name="Hayashi H."/>
        </authorList>
    </citation>
    <scope>NUCLEOTIDE SEQUENCE [LARGE SCALE GENOMIC DNA]</scope>
    <source>
        <strain>13 / Type A</strain>
    </source>
</reference>
<dbReference type="EMBL" id="BA000016">
    <property type="protein sequence ID" value="BAB81396.1"/>
    <property type="molecule type" value="Genomic_DNA"/>
</dbReference>
<dbReference type="RefSeq" id="WP_003459796.1">
    <property type="nucleotide sequence ID" value="NC_003366.1"/>
</dbReference>
<dbReference type="SMR" id="Q8XJR4"/>
<dbReference type="STRING" id="195102.gene:10490954"/>
<dbReference type="GeneID" id="93001772"/>
<dbReference type="KEGG" id="cpe:CPE1690"/>
<dbReference type="HOGENOM" id="CLU_070525_2_2_9"/>
<dbReference type="Proteomes" id="UP000000818">
    <property type="component" value="Chromosome"/>
</dbReference>
<dbReference type="GO" id="GO:0005829">
    <property type="term" value="C:cytosol"/>
    <property type="evidence" value="ECO:0007669"/>
    <property type="project" value="TreeGrafter"/>
</dbReference>
<dbReference type="GO" id="GO:0000028">
    <property type="term" value="P:ribosomal small subunit assembly"/>
    <property type="evidence" value="ECO:0007669"/>
    <property type="project" value="TreeGrafter"/>
</dbReference>
<dbReference type="GO" id="GO:0006412">
    <property type="term" value="P:translation"/>
    <property type="evidence" value="ECO:0007669"/>
    <property type="project" value="TreeGrafter"/>
</dbReference>
<dbReference type="CDD" id="cd01734">
    <property type="entry name" value="YlxS_C"/>
    <property type="match status" value="1"/>
</dbReference>
<dbReference type="FunFam" id="3.30.300.70:FF:000001">
    <property type="entry name" value="Ribosome maturation factor RimP"/>
    <property type="match status" value="1"/>
</dbReference>
<dbReference type="Gene3D" id="2.30.30.180">
    <property type="entry name" value="Ribosome maturation factor RimP, C-terminal domain"/>
    <property type="match status" value="1"/>
</dbReference>
<dbReference type="Gene3D" id="3.30.300.70">
    <property type="entry name" value="RimP-like superfamily, N-terminal"/>
    <property type="match status" value="1"/>
</dbReference>
<dbReference type="HAMAP" id="MF_01077">
    <property type="entry name" value="RimP"/>
    <property type="match status" value="1"/>
</dbReference>
<dbReference type="InterPro" id="IPR003728">
    <property type="entry name" value="Ribosome_maturation_RimP"/>
</dbReference>
<dbReference type="InterPro" id="IPR028998">
    <property type="entry name" value="RimP_C"/>
</dbReference>
<dbReference type="InterPro" id="IPR036847">
    <property type="entry name" value="RimP_C_sf"/>
</dbReference>
<dbReference type="InterPro" id="IPR028989">
    <property type="entry name" value="RimP_N"/>
</dbReference>
<dbReference type="InterPro" id="IPR035956">
    <property type="entry name" value="RimP_N_sf"/>
</dbReference>
<dbReference type="NCBIfam" id="NF000934">
    <property type="entry name" value="PRK00092.3-1"/>
    <property type="match status" value="1"/>
</dbReference>
<dbReference type="PANTHER" id="PTHR33867">
    <property type="entry name" value="RIBOSOME MATURATION FACTOR RIMP"/>
    <property type="match status" value="1"/>
</dbReference>
<dbReference type="PANTHER" id="PTHR33867:SF1">
    <property type="entry name" value="RIBOSOME MATURATION FACTOR RIMP"/>
    <property type="match status" value="1"/>
</dbReference>
<dbReference type="Pfam" id="PF17384">
    <property type="entry name" value="DUF150_C"/>
    <property type="match status" value="1"/>
</dbReference>
<dbReference type="Pfam" id="PF02576">
    <property type="entry name" value="RimP_N"/>
    <property type="match status" value="1"/>
</dbReference>
<dbReference type="SUPFAM" id="SSF74942">
    <property type="entry name" value="YhbC-like, C-terminal domain"/>
    <property type="match status" value="1"/>
</dbReference>
<dbReference type="SUPFAM" id="SSF75420">
    <property type="entry name" value="YhbC-like, N-terminal domain"/>
    <property type="match status" value="1"/>
</dbReference>
<comment type="function">
    <text evidence="1">Required for maturation of 30S ribosomal subunits.</text>
</comment>
<comment type="subcellular location">
    <subcellularLocation>
        <location evidence="1">Cytoplasm</location>
    </subcellularLocation>
</comment>
<comment type="similarity">
    <text evidence="1">Belongs to the RimP family.</text>
</comment>
<gene>
    <name evidence="1" type="primary">rimP</name>
    <name type="ordered locus">CPE1690</name>
</gene>
<accession>Q8XJR4</accession>
<proteinExistence type="inferred from homology"/>
<organism>
    <name type="scientific">Clostridium perfringens (strain 13 / Type A)</name>
    <dbReference type="NCBI Taxonomy" id="195102"/>
    <lineage>
        <taxon>Bacteria</taxon>
        <taxon>Bacillati</taxon>
        <taxon>Bacillota</taxon>
        <taxon>Clostridia</taxon>
        <taxon>Eubacteriales</taxon>
        <taxon>Clostridiaceae</taxon>
        <taxon>Clostridium</taxon>
    </lineage>
</organism>
<sequence length="154" mass="17836">MKKEQLVADLEALCAPIVKEKGYDLYHIEYVKENNEYYLRLYIEKPEERISLRDCEIVSRALSDMLDIEDPIKDAYFLEVSSPGLNRRLHSDEHFNRFIGKEVFVGFKSSLSGRKNVKGILKDVQENEIIVECEGNEIKVPKDKIKTANLEGEI</sequence>
<name>RIMP_CLOPE</name>
<keyword id="KW-0963">Cytoplasm</keyword>
<keyword id="KW-1185">Reference proteome</keyword>
<keyword id="KW-0690">Ribosome biogenesis</keyword>
<feature type="chain" id="PRO_0000181861" description="Ribosome maturation factor RimP">
    <location>
        <begin position="1"/>
        <end position="154"/>
    </location>
</feature>
<evidence type="ECO:0000255" key="1">
    <source>
        <dbReference type="HAMAP-Rule" id="MF_01077"/>
    </source>
</evidence>
<protein>
    <recommendedName>
        <fullName evidence="1">Ribosome maturation factor RimP</fullName>
    </recommendedName>
</protein>